<comment type="function">
    <text>Involved in oxygen transport from the lung to the various peripheral tissues.</text>
</comment>
<comment type="function">
    <molecule>Hemopressin</molecule>
    <text evidence="2">Hemopressin acts as an antagonist peptide of the cannabinoid receptor CNR1. Hemopressin-binding efficiently blocks cannabinoid receptor CNR1 and subsequent signaling.</text>
</comment>
<comment type="subunit">
    <text>Heterotetramer of two alpha chains and two beta chains.</text>
</comment>
<comment type="tissue specificity">
    <text>Red blood cells.</text>
</comment>
<comment type="similarity">
    <text evidence="4">Belongs to the globin family.</text>
</comment>
<sequence>MVLSAADKTNVKAAWSKVGGNSGAYMGEALYRTFLSFPPTKTYFPHFEFSAGSAQIKGQGQKIADAVSLAVAHMDDLATALSALSDLHAHNLKVDPVNFKFLCHNVLVTLASHLGKDFTPEIHASLDKFLALLSTVLTSKYR</sequence>
<dbReference type="EMBL" id="AJ417907">
    <property type="protein sequence ID" value="CAD10680.1"/>
    <property type="molecule type" value="mRNA"/>
</dbReference>
<dbReference type="RefSeq" id="NP_001028158.1">
    <property type="nucleotide sequence ID" value="NM_001032986.2"/>
</dbReference>
<dbReference type="SMR" id="Q8HY34"/>
<dbReference type="FunCoup" id="Q8HY34">
    <property type="interactions" value="4"/>
</dbReference>
<dbReference type="STRING" id="13616.ENSMODP00000020759"/>
<dbReference type="GeneID" id="554193"/>
<dbReference type="KEGG" id="mdo:554193"/>
<dbReference type="CTD" id="15121"/>
<dbReference type="eggNOG" id="KOG3378">
    <property type="taxonomic scope" value="Eukaryota"/>
</dbReference>
<dbReference type="InParanoid" id="Q8HY34"/>
<dbReference type="OrthoDB" id="8751793at2759"/>
<dbReference type="Proteomes" id="UP000002280">
    <property type="component" value="Unplaced"/>
</dbReference>
<dbReference type="GO" id="GO:0031838">
    <property type="term" value="C:haptoglobin-hemoglobin complex"/>
    <property type="evidence" value="ECO:0000318"/>
    <property type="project" value="GO_Central"/>
</dbReference>
<dbReference type="GO" id="GO:0005833">
    <property type="term" value="C:hemoglobin complex"/>
    <property type="evidence" value="ECO:0000318"/>
    <property type="project" value="GO_Central"/>
</dbReference>
<dbReference type="GO" id="GO:0020037">
    <property type="term" value="F:heme binding"/>
    <property type="evidence" value="ECO:0000318"/>
    <property type="project" value="GO_Central"/>
</dbReference>
<dbReference type="GO" id="GO:0046872">
    <property type="term" value="F:metal ion binding"/>
    <property type="evidence" value="ECO:0007669"/>
    <property type="project" value="UniProtKB-KW"/>
</dbReference>
<dbReference type="GO" id="GO:0019825">
    <property type="term" value="F:oxygen binding"/>
    <property type="evidence" value="ECO:0000318"/>
    <property type="project" value="GO_Central"/>
</dbReference>
<dbReference type="GO" id="GO:0005344">
    <property type="term" value="F:oxygen carrier activity"/>
    <property type="evidence" value="ECO:0000318"/>
    <property type="project" value="GO_Central"/>
</dbReference>
<dbReference type="GO" id="GO:0098869">
    <property type="term" value="P:cellular oxidant detoxification"/>
    <property type="evidence" value="ECO:0007669"/>
    <property type="project" value="GOC"/>
</dbReference>
<dbReference type="GO" id="GO:0042744">
    <property type="term" value="P:hydrogen peroxide catabolic process"/>
    <property type="evidence" value="ECO:0000318"/>
    <property type="project" value="GO_Central"/>
</dbReference>
<dbReference type="CDD" id="cd08927">
    <property type="entry name" value="Hb-alpha-like"/>
    <property type="match status" value="1"/>
</dbReference>
<dbReference type="FunFam" id="1.10.490.10:FF:000002">
    <property type="entry name" value="Hemoglobin subunit alpha"/>
    <property type="match status" value="1"/>
</dbReference>
<dbReference type="Gene3D" id="1.10.490.10">
    <property type="entry name" value="Globins"/>
    <property type="match status" value="1"/>
</dbReference>
<dbReference type="InterPro" id="IPR000971">
    <property type="entry name" value="Globin"/>
</dbReference>
<dbReference type="InterPro" id="IPR009050">
    <property type="entry name" value="Globin-like_sf"/>
</dbReference>
<dbReference type="InterPro" id="IPR012292">
    <property type="entry name" value="Globin/Proto"/>
</dbReference>
<dbReference type="InterPro" id="IPR002338">
    <property type="entry name" value="Hemoglobin_a-typ"/>
</dbReference>
<dbReference type="InterPro" id="IPR050056">
    <property type="entry name" value="Hemoglobin_oxygen_transport"/>
</dbReference>
<dbReference type="PANTHER" id="PTHR11442">
    <property type="entry name" value="HEMOGLOBIN FAMILY MEMBER"/>
    <property type="match status" value="1"/>
</dbReference>
<dbReference type="PANTHER" id="PTHR11442:SF48">
    <property type="entry name" value="HEMOGLOBIN SUBUNIT ALPHA"/>
    <property type="match status" value="1"/>
</dbReference>
<dbReference type="Pfam" id="PF00042">
    <property type="entry name" value="Globin"/>
    <property type="match status" value="1"/>
</dbReference>
<dbReference type="PRINTS" id="PR00612">
    <property type="entry name" value="ALPHAHAEM"/>
</dbReference>
<dbReference type="SUPFAM" id="SSF46458">
    <property type="entry name" value="Globin-like"/>
    <property type="match status" value="1"/>
</dbReference>
<dbReference type="PROSITE" id="PS01033">
    <property type="entry name" value="GLOBIN"/>
    <property type="match status" value="1"/>
</dbReference>
<protein>
    <recommendedName>
        <fullName>Hemoglobin subunit alpha</fullName>
    </recommendedName>
    <alternativeName>
        <fullName>Alpha-globin</fullName>
    </alternativeName>
    <alternativeName>
        <fullName>Hemoglobin alpha chain</fullName>
    </alternativeName>
    <component>
        <recommendedName>
            <fullName evidence="2">Hemopressin</fullName>
        </recommendedName>
    </component>
</protein>
<accession>Q8HY34</accession>
<name>HBA_MONDO</name>
<evidence type="ECO:0000250" key="1">
    <source>
        <dbReference type="UniProtKB" id="P01942"/>
    </source>
</evidence>
<evidence type="ECO:0000250" key="2">
    <source>
        <dbReference type="UniProtKB" id="P01946"/>
    </source>
</evidence>
<evidence type="ECO:0000250" key="3">
    <source>
        <dbReference type="UniProtKB" id="P69905"/>
    </source>
</evidence>
<evidence type="ECO:0000255" key="4">
    <source>
        <dbReference type="PROSITE-ProRule" id="PRU00238"/>
    </source>
</evidence>
<feature type="chain" id="PRO_0000052693" description="Hemoglobin subunit alpha">
    <location>
        <begin position="1"/>
        <end position="142"/>
    </location>
</feature>
<feature type="peptide" id="PRO_0000455905" description="Hemopressin" evidence="2">
    <location>
        <begin position="96"/>
        <end position="104"/>
    </location>
</feature>
<feature type="domain" description="Globin" evidence="4">
    <location>
        <begin position="2"/>
        <end position="142"/>
    </location>
</feature>
<feature type="binding site">
    <location>
        <position position="59"/>
    </location>
    <ligand>
        <name>O2</name>
        <dbReference type="ChEBI" id="CHEBI:15379"/>
    </ligand>
</feature>
<feature type="binding site" description="proximal binding residue">
    <location>
        <position position="88"/>
    </location>
    <ligand>
        <name>heme b</name>
        <dbReference type="ChEBI" id="CHEBI:60344"/>
    </ligand>
    <ligandPart>
        <name>Fe</name>
        <dbReference type="ChEBI" id="CHEBI:18248"/>
    </ligandPart>
</feature>
<feature type="modified residue" description="Phosphoserine" evidence="3">
    <location>
        <position position="4"/>
    </location>
</feature>
<feature type="modified residue" description="N6-succinyllysine" evidence="1">
    <location>
        <position position="8"/>
    </location>
</feature>
<feature type="modified residue" description="Phosphothreonine" evidence="3">
    <location>
        <position position="9"/>
    </location>
</feature>
<feature type="modified residue" description="N6-succinyllysine" evidence="1">
    <location>
        <position position="12"/>
    </location>
</feature>
<feature type="modified residue" description="N6-acetyllysine; alternate" evidence="3">
    <location>
        <position position="17"/>
    </location>
</feature>
<feature type="modified residue" description="N6-succinyllysine; alternate" evidence="1">
    <location>
        <position position="17"/>
    </location>
</feature>
<feature type="modified residue" description="Phosphotyrosine" evidence="3">
    <location>
        <position position="25"/>
    </location>
</feature>
<feature type="modified residue" description="Phosphoserine" evidence="3">
    <location>
        <position position="36"/>
    </location>
</feature>
<feature type="modified residue" description="N6-succinyllysine" evidence="1">
    <location>
        <position position="41"/>
    </location>
</feature>
<feature type="modified residue" description="Phosphoserine" evidence="3">
    <location>
        <position position="50"/>
    </location>
</feature>
<feature type="modified residue" description="Phosphothreonine" evidence="1">
    <location>
        <position position="109"/>
    </location>
</feature>
<feature type="modified residue" description="Phosphoserine" evidence="1">
    <location>
        <position position="125"/>
    </location>
</feature>
<feature type="modified residue" description="Phosphothreonine" evidence="1">
    <location>
        <position position="135"/>
    </location>
</feature>
<feature type="modified residue" description="Phosphothreonine" evidence="1">
    <location>
        <position position="138"/>
    </location>
</feature>
<feature type="modified residue" description="Phosphoserine" evidence="1">
    <location>
        <position position="139"/>
    </location>
</feature>
<reference key="1">
    <citation type="submission" date="2001-10" db="EMBL/GenBank/DDBJ databases">
        <title>Characterisation of opossum (Monodelphis domestica) carbonic anhydrase I and alpha globin coding sequences.</title>
        <authorList>
            <person name="Barome P.O."/>
        </authorList>
    </citation>
    <scope>NUCLEOTIDE SEQUENCE [MRNA]</scope>
</reference>
<organism>
    <name type="scientific">Monodelphis domestica</name>
    <name type="common">Gray short-tailed opossum</name>
    <dbReference type="NCBI Taxonomy" id="13616"/>
    <lineage>
        <taxon>Eukaryota</taxon>
        <taxon>Metazoa</taxon>
        <taxon>Chordata</taxon>
        <taxon>Craniata</taxon>
        <taxon>Vertebrata</taxon>
        <taxon>Euteleostomi</taxon>
        <taxon>Mammalia</taxon>
        <taxon>Metatheria</taxon>
        <taxon>Didelphimorphia</taxon>
        <taxon>Didelphidae</taxon>
        <taxon>Monodelphis</taxon>
    </lineage>
</organism>
<keyword id="KW-0007">Acetylation</keyword>
<keyword id="KW-0349">Heme</keyword>
<keyword id="KW-0408">Iron</keyword>
<keyword id="KW-0479">Metal-binding</keyword>
<keyword id="KW-0561">Oxygen transport</keyword>
<keyword id="KW-0597">Phosphoprotein</keyword>
<keyword id="KW-1185">Reference proteome</keyword>
<keyword id="KW-0813">Transport</keyword>
<proteinExistence type="evidence at transcript level"/>
<gene>
    <name type="primary">HBA</name>
</gene>